<keyword id="KW-0963">Cytoplasm</keyword>
<keyword id="KW-0275">Fatty acid biosynthesis</keyword>
<keyword id="KW-0276">Fatty acid metabolism</keyword>
<keyword id="KW-0444">Lipid biosynthesis</keyword>
<keyword id="KW-0443">Lipid metabolism</keyword>
<keyword id="KW-0460">Magnesium</keyword>
<keyword id="KW-0479">Metal-binding</keyword>
<keyword id="KW-1185">Reference proteome</keyword>
<keyword id="KW-0808">Transferase</keyword>
<protein>
    <recommendedName>
        <fullName evidence="1">Holo-[acyl-carrier-protein] synthase</fullName>
        <shortName evidence="1">Holo-ACP synthase</shortName>
        <ecNumber evidence="1">2.7.8.7</ecNumber>
    </recommendedName>
    <alternativeName>
        <fullName evidence="1">4'-phosphopantetheinyl transferase AcpS</fullName>
    </alternativeName>
</protein>
<accession>Q1GT99</accession>
<comment type="function">
    <text evidence="1">Transfers the 4'-phosphopantetheine moiety from coenzyme A to a Ser of acyl-carrier-protein.</text>
</comment>
<comment type="catalytic activity">
    <reaction evidence="1">
        <text>apo-[ACP] + CoA = holo-[ACP] + adenosine 3',5'-bisphosphate + H(+)</text>
        <dbReference type="Rhea" id="RHEA:12068"/>
        <dbReference type="Rhea" id="RHEA-COMP:9685"/>
        <dbReference type="Rhea" id="RHEA-COMP:9690"/>
        <dbReference type="ChEBI" id="CHEBI:15378"/>
        <dbReference type="ChEBI" id="CHEBI:29999"/>
        <dbReference type="ChEBI" id="CHEBI:57287"/>
        <dbReference type="ChEBI" id="CHEBI:58343"/>
        <dbReference type="ChEBI" id="CHEBI:64479"/>
        <dbReference type="EC" id="2.7.8.7"/>
    </reaction>
</comment>
<comment type="cofactor">
    <cofactor evidence="1">
        <name>Mg(2+)</name>
        <dbReference type="ChEBI" id="CHEBI:18420"/>
    </cofactor>
</comment>
<comment type="subcellular location">
    <subcellularLocation>
        <location evidence="1">Cytoplasm</location>
    </subcellularLocation>
</comment>
<comment type="similarity">
    <text evidence="1">Belongs to the P-Pant transferase superfamily. AcpS family.</text>
</comment>
<dbReference type="EC" id="2.7.8.7" evidence="1"/>
<dbReference type="EMBL" id="CP000356">
    <property type="protein sequence ID" value="ABF53123.1"/>
    <property type="molecule type" value="Genomic_DNA"/>
</dbReference>
<dbReference type="RefSeq" id="WP_011541703.1">
    <property type="nucleotide sequence ID" value="NC_008048.1"/>
</dbReference>
<dbReference type="SMR" id="Q1GT99"/>
<dbReference type="STRING" id="317655.Sala_1409"/>
<dbReference type="KEGG" id="sal:Sala_1409"/>
<dbReference type="eggNOG" id="COG0736">
    <property type="taxonomic scope" value="Bacteria"/>
</dbReference>
<dbReference type="HOGENOM" id="CLU_089696_0_2_5"/>
<dbReference type="OrthoDB" id="517356at2"/>
<dbReference type="Proteomes" id="UP000006578">
    <property type="component" value="Chromosome"/>
</dbReference>
<dbReference type="GO" id="GO:0005737">
    <property type="term" value="C:cytoplasm"/>
    <property type="evidence" value="ECO:0007669"/>
    <property type="project" value="UniProtKB-SubCell"/>
</dbReference>
<dbReference type="GO" id="GO:0008897">
    <property type="term" value="F:holo-[acyl-carrier-protein] synthase activity"/>
    <property type="evidence" value="ECO:0007669"/>
    <property type="project" value="UniProtKB-UniRule"/>
</dbReference>
<dbReference type="GO" id="GO:0000287">
    <property type="term" value="F:magnesium ion binding"/>
    <property type="evidence" value="ECO:0007669"/>
    <property type="project" value="UniProtKB-UniRule"/>
</dbReference>
<dbReference type="GO" id="GO:0006633">
    <property type="term" value="P:fatty acid biosynthetic process"/>
    <property type="evidence" value="ECO:0007669"/>
    <property type="project" value="UniProtKB-UniRule"/>
</dbReference>
<dbReference type="Gene3D" id="3.90.470.20">
    <property type="entry name" value="4'-phosphopantetheinyl transferase domain"/>
    <property type="match status" value="1"/>
</dbReference>
<dbReference type="HAMAP" id="MF_00101">
    <property type="entry name" value="AcpS"/>
    <property type="match status" value="1"/>
</dbReference>
<dbReference type="InterPro" id="IPR008278">
    <property type="entry name" value="4-PPantetheinyl_Trfase_dom"/>
</dbReference>
<dbReference type="InterPro" id="IPR037143">
    <property type="entry name" value="4-PPantetheinyl_Trfase_dom_sf"/>
</dbReference>
<dbReference type="InterPro" id="IPR002582">
    <property type="entry name" value="ACPS"/>
</dbReference>
<dbReference type="InterPro" id="IPR004568">
    <property type="entry name" value="Ppantetheine-prot_Trfase_dom"/>
</dbReference>
<dbReference type="NCBIfam" id="TIGR00516">
    <property type="entry name" value="acpS"/>
    <property type="match status" value="1"/>
</dbReference>
<dbReference type="NCBIfam" id="TIGR00556">
    <property type="entry name" value="pantethn_trn"/>
    <property type="match status" value="1"/>
</dbReference>
<dbReference type="Pfam" id="PF01648">
    <property type="entry name" value="ACPS"/>
    <property type="match status" value="1"/>
</dbReference>
<dbReference type="SUPFAM" id="SSF56214">
    <property type="entry name" value="4'-phosphopantetheinyl transferase"/>
    <property type="match status" value="1"/>
</dbReference>
<reference key="1">
    <citation type="journal article" date="2009" name="Proc. Natl. Acad. Sci. U.S.A.">
        <title>The genomic basis of trophic strategy in marine bacteria.</title>
        <authorList>
            <person name="Lauro F.M."/>
            <person name="McDougald D."/>
            <person name="Thomas T."/>
            <person name="Williams T.J."/>
            <person name="Egan S."/>
            <person name="Rice S."/>
            <person name="DeMaere M.Z."/>
            <person name="Ting L."/>
            <person name="Ertan H."/>
            <person name="Johnson J."/>
            <person name="Ferriera S."/>
            <person name="Lapidus A."/>
            <person name="Anderson I."/>
            <person name="Kyrpides N."/>
            <person name="Munk A.C."/>
            <person name="Detter C."/>
            <person name="Han C.S."/>
            <person name="Brown M.V."/>
            <person name="Robb F.T."/>
            <person name="Kjelleberg S."/>
            <person name="Cavicchioli R."/>
        </authorList>
    </citation>
    <scope>NUCLEOTIDE SEQUENCE [LARGE SCALE GENOMIC DNA]</scope>
    <source>
        <strain>DSM 13593 / LMG 18877 / RB2256</strain>
    </source>
</reference>
<evidence type="ECO:0000255" key="1">
    <source>
        <dbReference type="HAMAP-Rule" id="MF_00101"/>
    </source>
</evidence>
<organism>
    <name type="scientific">Sphingopyxis alaskensis (strain DSM 13593 / LMG 18877 / RB2256)</name>
    <name type="common">Sphingomonas alaskensis</name>
    <dbReference type="NCBI Taxonomy" id="317655"/>
    <lineage>
        <taxon>Bacteria</taxon>
        <taxon>Pseudomonadati</taxon>
        <taxon>Pseudomonadota</taxon>
        <taxon>Alphaproteobacteria</taxon>
        <taxon>Sphingomonadales</taxon>
        <taxon>Sphingomonadaceae</taxon>
        <taxon>Sphingopyxis</taxon>
    </lineage>
</organism>
<name>ACPS_SPHAL</name>
<gene>
    <name evidence="1" type="primary">acpS</name>
    <name type="ordered locus">Sala_1409</name>
</gene>
<proteinExistence type="inferred from homology"/>
<feature type="chain" id="PRO_1000008505" description="Holo-[acyl-carrier-protein] synthase">
    <location>
        <begin position="1"/>
        <end position="133"/>
    </location>
</feature>
<feature type="binding site" evidence="1">
    <location>
        <position position="8"/>
    </location>
    <ligand>
        <name>Mg(2+)</name>
        <dbReference type="ChEBI" id="CHEBI:18420"/>
    </ligand>
</feature>
<feature type="binding site" evidence="1">
    <location>
        <position position="58"/>
    </location>
    <ligand>
        <name>Mg(2+)</name>
        <dbReference type="ChEBI" id="CHEBI:18420"/>
    </ligand>
</feature>
<sequence>MIIGLGSDLCNIERIQASLDRFGERFENRVFTDVERAKAARRPFTRAGTYAKRFAAKEAFSKAVGTGFKRGVFMKDIGVVNAPSGAPTLALTGGAAERLAAMIPPGHTAHIHLTLTDDHPWAQAFVIIEAIKD</sequence>